<dbReference type="EC" id="3.2.1.14"/>
<dbReference type="EMBL" id="FO080344">
    <property type="protein sequence ID" value="CCD63028.1"/>
    <property type="molecule type" value="Genomic_DNA"/>
</dbReference>
<dbReference type="EMBL" id="AF026152">
    <property type="protein sequence ID" value="AAB81847.1"/>
    <property type="molecule type" value="Genomic_DNA"/>
</dbReference>
<dbReference type="PIR" id="T15408">
    <property type="entry name" value="T15408"/>
</dbReference>
<dbReference type="PIR" id="T37249">
    <property type="entry name" value="T37249"/>
</dbReference>
<dbReference type="RefSeq" id="NP_508588.1">
    <property type="nucleotide sequence ID" value="NM_076187.5"/>
</dbReference>
<dbReference type="PDB" id="6LDU">
    <property type="method" value="X-ray"/>
    <property type="resolution" value="1.70 A"/>
    <property type="chains" value="A=52-433"/>
</dbReference>
<dbReference type="PDB" id="6LE7">
    <property type="method" value="X-ray"/>
    <property type="resolution" value="1.86 A"/>
    <property type="chains" value="A=53-433"/>
</dbReference>
<dbReference type="PDB" id="6LE8">
    <property type="method" value="X-ray"/>
    <property type="resolution" value="1.40 A"/>
    <property type="chains" value="A=52-431"/>
</dbReference>
<dbReference type="PDBsum" id="6LDU"/>
<dbReference type="PDBsum" id="6LE7"/>
<dbReference type="PDBsum" id="6LE8"/>
<dbReference type="SMR" id="Q11174"/>
<dbReference type="BioGRID" id="45569">
    <property type="interactions" value="4"/>
</dbReference>
<dbReference type="FunCoup" id="Q11174">
    <property type="interactions" value="62"/>
</dbReference>
<dbReference type="STRING" id="6239.C04F6.3.1"/>
<dbReference type="CAZy" id="CBM14">
    <property type="family name" value="Carbohydrate-Binding Module Family 14"/>
</dbReference>
<dbReference type="CAZy" id="GH18">
    <property type="family name" value="Glycoside Hydrolase Family 18"/>
</dbReference>
<dbReference type="GlyCosmos" id="Q11174">
    <property type="glycosylation" value="1 site, No reported glycans"/>
</dbReference>
<dbReference type="iPTMnet" id="Q11174"/>
<dbReference type="PaxDb" id="6239-C04F6.3"/>
<dbReference type="PeptideAtlas" id="Q11174"/>
<dbReference type="EnsemblMetazoa" id="C04F6.3.1">
    <property type="protein sequence ID" value="C04F6.3.1"/>
    <property type="gene ID" value="WBGene00000503"/>
</dbReference>
<dbReference type="GeneID" id="180628"/>
<dbReference type="KEGG" id="cel:CELE_C04F6.3"/>
<dbReference type="UCSC" id="C04F6.3.1">
    <property type="organism name" value="c. elegans"/>
</dbReference>
<dbReference type="AGR" id="WB:WBGene00000503"/>
<dbReference type="CTD" id="180628"/>
<dbReference type="WormBase" id="C04F6.3">
    <property type="protein sequence ID" value="CE03923"/>
    <property type="gene ID" value="WBGene00000503"/>
    <property type="gene designation" value="cht-1"/>
</dbReference>
<dbReference type="eggNOG" id="KOG2806">
    <property type="taxonomic scope" value="Eukaryota"/>
</dbReference>
<dbReference type="GeneTree" id="ENSGT00940000168919"/>
<dbReference type="HOGENOM" id="CLU_002833_3_1_1"/>
<dbReference type="InParanoid" id="Q11174"/>
<dbReference type="OMA" id="GATRYWD"/>
<dbReference type="OrthoDB" id="76388at2759"/>
<dbReference type="PhylomeDB" id="Q11174"/>
<dbReference type="Reactome" id="R-CEL-189085">
    <property type="pathway name" value="Digestion of dietary carbohydrate"/>
</dbReference>
<dbReference type="Reactome" id="R-CEL-6798695">
    <property type="pathway name" value="Neutrophil degranulation"/>
</dbReference>
<dbReference type="PRO" id="PR:Q11174"/>
<dbReference type="Proteomes" id="UP000001940">
    <property type="component" value="Chromosome X"/>
</dbReference>
<dbReference type="Bgee" id="WBGene00000503">
    <property type="expression patterns" value="Expressed in embryo and 4 other cell types or tissues"/>
</dbReference>
<dbReference type="GO" id="GO:0005576">
    <property type="term" value="C:extracellular region"/>
    <property type="evidence" value="ECO:0000318"/>
    <property type="project" value="GO_Central"/>
</dbReference>
<dbReference type="GO" id="GO:0008061">
    <property type="term" value="F:chitin binding"/>
    <property type="evidence" value="ECO:0007669"/>
    <property type="project" value="UniProtKB-KW"/>
</dbReference>
<dbReference type="GO" id="GO:0004568">
    <property type="term" value="F:chitinase activity"/>
    <property type="evidence" value="ECO:0000314"/>
    <property type="project" value="WormBase"/>
</dbReference>
<dbReference type="GO" id="GO:0008843">
    <property type="term" value="F:endochitinase activity"/>
    <property type="evidence" value="ECO:0007669"/>
    <property type="project" value="UniProtKB-EC"/>
</dbReference>
<dbReference type="GO" id="GO:0036500">
    <property type="term" value="P:ATF6-mediated unfolded protein response"/>
    <property type="evidence" value="ECO:0007007"/>
    <property type="project" value="WormBase"/>
</dbReference>
<dbReference type="GO" id="GO:0006032">
    <property type="term" value="P:chitin catabolic process"/>
    <property type="evidence" value="ECO:0000314"/>
    <property type="project" value="WormBase"/>
</dbReference>
<dbReference type="GO" id="GO:0000272">
    <property type="term" value="P:polysaccharide catabolic process"/>
    <property type="evidence" value="ECO:0007669"/>
    <property type="project" value="UniProtKB-KW"/>
</dbReference>
<dbReference type="GO" id="GO:0009620">
    <property type="term" value="P:response to fungus"/>
    <property type="evidence" value="ECO:0000270"/>
    <property type="project" value="WormBase"/>
</dbReference>
<dbReference type="CDD" id="cd02872">
    <property type="entry name" value="GH18_chitolectin_chitotriosidase"/>
    <property type="match status" value="1"/>
</dbReference>
<dbReference type="FunFam" id="3.20.20.80:FF:000007">
    <property type="entry name" value="Acidic mammalian chitinase"/>
    <property type="match status" value="1"/>
</dbReference>
<dbReference type="FunFam" id="3.10.50.10:FF:000008">
    <property type="entry name" value="Chitinase 11"/>
    <property type="match status" value="1"/>
</dbReference>
<dbReference type="FunFam" id="2.170.140.10:FF:000009">
    <property type="entry name" value="Chondroitin proteoglycan 1"/>
    <property type="match status" value="1"/>
</dbReference>
<dbReference type="Gene3D" id="3.10.50.10">
    <property type="match status" value="1"/>
</dbReference>
<dbReference type="Gene3D" id="2.170.140.10">
    <property type="entry name" value="Chitin binding domain"/>
    <property type="match status" value="2"/>
</dbReference>
<dbReference type="Gene3D" id="3.20.20.80">
    <property type="entry name" value="Glycosidases"/>
    <property type="match status" value="1"/>
</dbReference>
<dbReference type="InterPro" id="IPR002557">
    <property type="entry name" value="Chitin-bd_dom"/>
</dbReference>
<dbReference type="InterPro" id="IPR036508">
    <property type="entry name" value="Chitin-bd_dom_sf"/>
</dbReference>
<dbReference type="InterPro" id="IPR011583">
    <property type="entry name" value="Chitinase_II/V-like_cat"/>
</dbReference>
<dbReference type="InterPro" id="IPR029070">
    <property type="entry name" value="Chitinase_insertion_sf"/>
</dbReference>
<dbReference type="InterPro" id="IPR001223">
    <property type="entry name" value="Glyco_hydro18_cat"/>
</dbReference>
<dbReference type="InterPro" id="IPR001579">
    <property type="entry name" value="Glyco_hydro_18_chit_AS"/>
</dbReference>
<dbReference type="InterPro" id="IPR017853">
    <property type="entry name" value="Glycoside_hydrolase_SF"/>
</dbReference>
<dbReference type="InterPro" id="IPR050314">
    <property type="entry name" value="Glycosyl_Hydrlase_18"/>
</dbReference>
<dbReference type="PANTHER" id="PTHR11177">
    <property type="entry name" value="CHITINASE"/>
    <property type="match status" value="1"/>
</dbReference>
<dbReference type="PANTHER" id="PTHR11177:SF400">
    <property type="entry name" value="ENDOCHITINASE-RELATED"/>
    <property type="match status" value="1"/>
</dbReference>
<dbReference type="Pfam" id="PF01607">
    <property type="entry name" value="CBM_14"/>
    <property type="match status" value="2"/>
</dbReference>
<dbReference type="Pfam" id="PF00704">
    <property type="entry name" value="Glyco_hydro_18"/>
    <property type="match status" value="1"/>
</dbReference>
<dbReference type="SMART" id="SM00494">
    <property type="entry name" value="ChtBD2"/>
    <property type="match status" value="2"/>
</dbReference>
<dbReference type="SMART" id="SM00636">
    <property type="entry name" value="Glyco_18"/>
    <property type="match status" value="1"/>
</dbReference>
<dbReference type="SUPFAM" id="SSF51445">
    <property type="entry name" value="(Trans)glycosidases"/>
    <property type="match status" value="1"/>
</dbReference>
<dbReference type="SUPFAM" id="SSF54556">
    <property type="entry name" value="Chitinase insertion domain"/>
    <property type="match status" value="1"/>
</dbReference>
<dbReference type="SUPFAM" id="SSF57625">
    <property type="entry name" value="Invertebrate chitin-binding proteins"/>
    <property type="match status" value="2"/>
</dbReference>
<dbReference type="PROSITE" id="PS50940">
    <property type="entry name" value="CHIT_BIND_II"/>
    <property type="match status" value="2"/>
</dbReference>
<dbReference type="PROSITE" id="PS01095">
    <property type="entry name" value="GH18_1"/>
    <property type="match status" value="1"/>
</dbReference>
<dbReference type="PROSITE" id="PS51910">
    <property type="entry name" value="GH18_2"/>
    <property type="match status" value="1"/>
</dbReference>
<accession>Q11174</accession>
<accession>O17321</accession>
<keyword id="KW-0002">3D-structure</keyword>
<keyword id="KW-0119">Carbohydrate metabolism</keyword>
<keyword id="KW-0146">Chitin degradation</keyword>
<keyword id="KW-0147">Chitin-binding</keyword>
<keyword id="KW-1015">Disulfide bond</keyword>
<keyword id="KW-0325">Glycoprotein</keyword>
<keyword id="KW-0326">Glycosidase</keyword>
<keyword id="KW-0378">Hydrolase</keyword>
<keyword id="KW-0624">Polysaccharide degradation</keyword>
<keyword id="KW-1185">Reference proteome</keyword>
<keyword id="KW-0677">Repeat</keyword>
<feature type="chain" id="PRO_0000077049" description="Probable endochitinase">
    <location>
        <begin position="1"/>
        <end position="617"/>
    </location>
</feature>
<feature type="domain" description="GH18" evidence="2">
    <location>
        <begin position="53"/>
        <end position="426"/>
    </location>
</feature>
<feature type="domain" description="Chitin-binding type-2 1" evidence="1">
    <location>
        <begin position="478"/>
        <end position="534"/>
    </location>
</feature>
<feature type="domain" description="Chitin-binding type-2 2" evidence="1">
    <location>
        <begin position="563"/>
        <end position="617"/>
    </location>
</feature>
<feature type="active site" description="Proton donor" evidence="2">
    <location>
        <position position="179"/>
    </location>
</feature>
<feature type="binding site" evidence="2">
    <location>
        <begin position="109"/>
        <end position="110"/>
    </location>
    <ligand>
        <name>chitin</name>
        <dbReference type="ChEBI" id="CHEBI:17029"/>
    </ligand>
</feature>
<feature type="binding site" evidence="2">
    <location>
        <begin position="136"/>
        <end position="139"/>
    </location>
    <ligand>
        <name>chitin</name>
        <dbReference type="ChEBI" id="CHEBI:17029"/>
    </ligand>
</feature>
<feature type="binding site" evidence="2">
    <location>
        <position position="180"/>
    </location>
    <ligand>
        <name>chitin</name>
        <dbReference type="ChEBI" id="CHEBI:17029"/>
    </ligand>
</feature>
<feature type="binding site" evidence="2">
    <location>
        <begin position="245"/>
        <end position="248"/>
    </location>
    <ligand>
        <name>chitin</name>
        <dbReference type="ChEBI" id="CHEBI:17029"/>
    </ligand>
</feature>
<feature type="binding site" evidence="2">
    <location>
        <position position="394"/>
    </location>
    <ligand>
        <name>chitin</name>
        <dbReference type="ChEBI" id="CHEBI:17029"/>
    </ligand>
</feature>
<feature type="glycosylation site" description="N-linked (GlcNAc...) asparagine" evidence="3 4">
    <location>
        <position position="310"/>
    </location>
</feature>
<feature type="disulfide bond" evidence="2">
    <location>
        <begin position="57"/>
        <end position="82"/>
    </location>
</feature>
<feature type="disulfide bond" evidence="1">
    <location>
        <begin position="511"/>
        <end position="524"/>
    </location>
</feature>
<feature type="disulfide bond" evidence="1">
    <location>
        <begin position="594"/>
        <end position="607"/>
    </location>
</feature>
<feature type="sequence conflict" description="In Ref. 2; AAB81847." evidence="5" ref="2">
    <original>W</original>
    <variation>C</variation>
    <location>
        <position position="138"/>
    </location>
</feature>
<feature type="sequence conflict" description="In Ref. 2; AAB81847." evidence="5" ref="2">
    <original>ITF</original>
    <variation>TTS</variation>
    <location>
        <begin position="163"/>
        <end position="165"/>
    </location>
</feature>
<feature type="sequence conflict" description="In Ref. 2; AAB81847." evidence="5" ref="2">
    <original>I</original>
    <variation>L</variation>
    <location>
        <position position="176"/>
    </location>
</feature>
<feature type="strand" evidence="7">
    <location>
        <begin position="56"/>
        <end position="60"/>
    </location>
</feature>
<feature type="helix" evidence="7">
    <location>
        <begin position="63"/>
        <end position="65"/>
    </location>
</feature>
<feature type="helix" evidence="7">
    <location>
        <begin position="68"/>
        <end position="70"/>
    </location>
</feature>
<feature type="helix" evidence="7">
    <location>
        <begin position="74"/>
        <end position="76"/>
    </location>
</feature>
<feature type="strand" evidence="7">
    <location>
        <begin position="83"/>
        <end position="92"/>
    </location>
</feature>
<feature type="strand" evidence="7">
    <location>
        <begin position="98"/>
        <end position="102"/>
    </location>
</feature>
<feature type="helix" evidence="7">
    <location>
        <begin position="103"/>
        <end position="105"/>
    </location>
</feature>
<feature type="turn" evidence="7">
    <location>
        <begin position="109"/>
        <end position="111"/>
    </location>
</feature>
<feature type="helix" evidence="7">
    <location>
        <begin position="115"/>
        <end position="120"/>
    </location>
</feature>
<feature type="helix" evidence="7">
    <location>
        <begin position="122"/>
        <end position="125"/>
    </location>
</feature>
<feature type="strand" evidence="7">
    <location>
        <begin position="130"/>
        <end position="136"/>
    </location>
</feature>
<feature type="turn" evidence="7">
    <location>
        <begin position="138"/>
        <end position="140"/>
    </location>
</feature>
<feature type="helix" evidence="7">
    <location>
        <begin position="143"/>
        <end position="148"/>
    </location>
</feature>
<feature type="helix" evidence="7">
    <location>
        <begin position="152"/>
        <end position="169"/>
    </location>
</feature>
<feature type="strand" evidence="7">
    <location>
        <begin position="172"/>
        <end position="177"/>
    </location>
</feature>
<feature type="helix" evidence="7">
    <location>
        <begin position="184"/>
        <end position="208"/>
    </location>
</feature>
<feature type="strand" evidence="7">
    <location>
        <begin position="214"/>
        <end position="219"/>
    </location>
</feature>
<feature type="helix" evidence="7">
    <location>
        <begin position="223"/>
        <end position="229"/>
    </location>
</feature>
<feature type="helix" evidence="7">
    <location>
        <begin position="232"/>
        <end position="235"/>
    </location>
</feature>
<feature type="helix" evidence="7">
    <location>
        <begin position="236"/>
        <end position="238"/>
    </location>
</feature>
<feature type="strand" evidence="7">
    <location>
        <begin position="240"/>
        <end position="244"/>
    </location>
</feature>
<feature type="strand" evidence="7">
    <location>
        <begin position="254"/>
        <end position="256"/>
    </location>
</feature>
<feature type="helix" evidence="7">
    <location>
        <begin position="271"/>
        <end position="273"/>
    </location>
</feature>
<feature type="helix" evidence="7">
    <location>
        <begin position="278"/>
        <end position="287"/>
    </location>
</feature>
<feature type="helix" evidence="7">
    <location>
        <begin position="292"/>
        <end position="294"/>
    </location>
</feature>
<feature type="strand" evidence="7">
    <location>
        <begin position="295"/>
        <end position="310"/>
    </location>
</feature>
<feature type="strand" evidence="7">
    <location>
        <begin position="319"/>
        <end position="322"/>
    </location>
</feature>
<feature type="turn" evidence="7">
    <location>
        <begin position="327"/>
        <end position="329"/>
    </location>
</feature>
<feature type="strand" evidence="7">
    <location>
        <begin position="334"/>
        <end position="336"/>
    </location>
</feature>
<feature type="helix" evidence="7">
    <location>
        <begin position="337"/>
        <end position="345"/>
    </location>
</feature>
<feature type="strand" evidence="7">
    <location>
        <begin position="349"/>
        <end position="353"/>
    </location>
</feature>
<feature type="turn" evidence="7">
    <location>
        <begin position="354"/>
        <end position="357"/>
    </location>
</feature>
<feature type="strand" evidence="7">
    <location>
        <begin position="358"/>
        <end position="363"/>
    </location>
</feature>
<feature type="strand" evidence="7">
    <location>
        <begin position="366"/>
        <end position="369"/>
    </location>
</feature>
<feature type="helix" evidence="7">
    <location>
        <begin position="373"/>
        <end position="386"/>
    </location>
</feature>
<feature type="strand" evidence="7">
    <location>
        <begin position="389"/>
        <end position="394"/>
    </location>
</feature>
<feature type="helix" evidence="7">
    <location>
        <begin position="396"/>
        <end position="398"/>
    </location>
</feature>
<feature type="strand" evidence="7">
    <location>
        <begin position="410"/>
        <end position="413"/>
    </location>
</feature>
<feature type="helix" evidence="7">
    <location>
        <begin position="416"/>
        <end position="424"/>
    </location>
</feature>
<feature type="strand" evidence="6">
    <location>
        <begin position="430"/>
        <end position="432"/>
    </location>
</feature>
<organism>
    <name type="scientific">Caenorhabditis elegans</name>
    <dbReference type="NCBI Taxonomy" id="6239"/>
    <lineage>
        <taxon>Eukaryota</taxon>
        <taxon>Metazoa</taxon>
        <taxon>Ecdysozoa</taxon>
        <taxon>Nematoda</taxon>
        <taxon>Chromadorea</taxon>
        <taxon>Rhabditida</taxon>
        <taxon>Rhabditina</taxon>
        <taxon>Rhabditomorpha</taxon>
        <taxon>Rhabditoidea</taxon>
        <taxon>Rhabditidae</taxon>
        <taxon>Peloderinae</taxon>
        <taxon>Caenorhabditis</taxon>
    </lineage>
</organism>
<name>CHIT_CAEEL</name>
<proteinExistence type="evidence at protein level"/>
<protein>
    <recommendedName>
        <fullName>Probable endochitinase</fullName>
        <ecNumber>3.2.1.14</ecNumber>
    </recommendedName>
</protein>
<reference key="1">
    <citation type="journal article" date="1998" name="Science">
        <title>Genome sequence of the nematode C. elegans: a platform for investigating biology.</title>
        <authorList>
            <consortium name="The C. elegans sequencing consortium"/>
        </authorList>
    </citation>
    <scope>NUCLEOTIDE SEQUENCE [LARGE SCALE GENOMIC DNA]</scope>
    <source>
        <strain>Bristol N2</strain>
    </source>
</reference>
<reference key="2">
    <citation type="journal article" date="1998" name="Insect Mol. Biol.">
        <title>Chitinases are a multi-gene family in Aedes, Anopheles and Drosophila.</title>
        <authorList>
            <person name="de la Vega H."/>
            <person name="Specht C.A."/>
            <person name="Liu Y."/>
            <person name="Robbins P.W."/>
        </authorList>
    </citation>
    <scope>NUCLEOTIDE SEQUENCE [GENOMIC DNA] OF 62-178</scope>
</reference>
<reference key="3">
    <citation type="journal article" date="2003" name="Nat. Biotechnol.">
        <title>Lectin affinity capture, isotope-coded tagging and mass spectrometry to identify N-linked glycoproteins.</title>
        <authorList>
            <person name="Kaji H."/>
            <person name="Saito H."/>
            <person name="Yamauchi Y."/>
            <person name="Shinkawa T."/>
            <person name="Taoka M."/>
            <person name="Hirabayashi J."/>
            <person name="Kasai K."/>
            <person name="Takahashi N."/>
            <person name="Isobe T."/>
        </authorList>
    </citation>
    <scope>GLYCOSYLATION [LARGE SCALE ANALYSIS] AT ASN-310</scope>
    <scope>IDENTIFICATION BY MASS SPECTROMETRY</scope>
    <source>
        <strain>Bristol N2</strain>
    </source>
</reference>
<reference key="4">
    <citation type="journal article" date="2007" name="Mol. Cell. Proteomics">
        <title>Proteomics reveals N-linked glycoprotein diversity in Caenorhabditis elegans and suggests an atypical translocation mechanism for integral membrane proteins.</title>
        <authorList>
            <person name="Kaji H."/>
            <person name="Kamiie J."/>
            <person name="Kawakami H."/>
            <person name="Kido K."/>
            <person name="Yamauchi Y."/>
            <person name="Shinkawa T."/>
            <person name="Taoka M."/>
            <person name="Takahashi N."/>
            <person name="Isobe T."/>
        </authorList>
    </citation>
    <scope>GLYCOSYLATION [LARGE SCALE ANALYSIS] AT ASN-310</scope>
    <scope>IDENTIFICATION BY MASS SPECTROMETRY</scope>
    <source>
        <strain>Bristol N2</strain>
    </source>
</reference>
<comment type="catalytic activity">
    <reaction>
        <text>Random endo-hydrolysis of N-acetyl-beta-D-glucosaminide (1-&gt;4)-beta-linkages in chitin and chitodextrins.</text>
        <dbReference type="EC" id="3.2.1.14"/>
    </reaction>
</comment>
<comment type="similarity">
    <text evidence="5">Belongs to the glycosyl hydrolase 18 family. Chitinase class II subfamily.</text>
</comment>
<evidence type="ECO:0000255" key="1">
    <source>
        <dbReference type="PROSITE-ProRule" id="PRU00144"/>
    </source>
</evidence>
<evidence type="ECO:0000255" key="2">
    <source>
        <dbReference type="PROSITE-ProRule" id="PRU01258"/>
    </source>
</evidence>
<evidence type="ECO:0000269" key="3">
    <source>
    </source>
</evidence>
<evidence type="ECO:0000269" key="4">
    <source>
    </source>
</evidence>
<evidence type="ECO:0000305" key="5"/>
<evidence type="ECO:0007829" key="6">
    <source>
        <dbReference type="PDB" id="6LDU"/>
    </source>
</evidence>
<evidence type="ECO:0007829" key="7">
    <source>
        <dbReference type="PDB" id="6LE8"/>
    </source>
</evidence>
<sequence length="617" mass="66857">MLLGKFLLVASFILPIAYTWTGATIRNHPADVVAARNKITSRSVARSEPTNSYIRPCYFTNWAQYRQGRAKFVPEDYTPGLCTHILFAFGWMNADYTVRAYDPADLPNDWAGEGMYRRVNKLKVTDTQLKTLLSFGGWSFGTALFQGMAASSASRKVFIDSAITFVRTWGFDGIDIDWEYPSGATDMANYVALVKELKAACESEAGSTGKDRLLVTAAVAAGPATIDAGYDIPNLAPNFDFILLMSYDFFGAWASLVGFNSPLYATTELPAEWNGWNVDSSARYWNQKGMPKEKIIVGMPTYGRGWTLNNASAINPGTSGSPAKITQYVQEAGVGAYFEFCEMLANGATRYWDSQSQVPYLVQGNQWWSYDDEESFANKMAYVKREGYGGAFVWTLDFDDFNAGCSNSNGQLYPLISVIAKELGGVIIPKKGGVTTAPTTVATTVTTGRPPMTSAVTTTTAATTTTTRAATTTTASNTNVCSGKSDGFYPNSNNCGLFVLCLSSKSYSMSCPSGLQYSASLKYCTTSTASGCSVTTTRAPTTTTKSAPTVTTTTRAPTTTTPAFKCTKDGFFGVPSDCLKFIRCVNGISYNFECPNGLSFHADTMMCDRPDPSKCAK</sequence>
<gene>
    <name type="primary">cht-1</name>
    <name type="ORF">C04F6.3</name>
</gene>